<accession>Q7XQ45</accession>
<accession>A0A0P0W986</accession>
<proteinExistence type="evidence at transcript level"/>
<gene>
    <name type="ordered locus">Os04g0339400</name>
    <name type="ordered locus">LOC_Os04g27060</name>
    <name type="ORF">OsJ_14323</name>
    <name type="ORF">OSJNBa0032I19.9</name>
</gene>
<sequence>MAAAAATAPAAAVVRRMKLGSQGMEVSAQGLGCMGMSAVYGERKPEADMVALVRHAVAAGVTFLDTSDVYGPHTNEVLVGKAVAAAAATEEEVQVQVATKFGITPAWEVRGDPAYVRAACEGSLRRLGVGCIDLYYQHRIDSTVPVEITMGELKKLVEEGKIKYIGLSEASASTIRRAHVVHPITAVQIEWSLWSRDVEEDIVPTCRELGIGIVAYSPLGRGFFSSGAKLVDELPDDDFRKSLPRFQPENLEKNAAIFEKVNAMAARKGCTSSQLALAWVHHQGSDVCPIPGTTKIHNFDQNVGALSVKLTPDEMSELESYASADVVQGDRYHGTFLNTWKNSETPPLSSWRSGN</sequence>
<comment type="similarity">
    <text evidence="2">Belongs to the aldo/keto reductase family.</text>
</comment>
<keyword id="KW-0521">NADP</keyword>
<keyword id="KW-0560">Oxidoreductase</keyword>
<keyword id="KW-1185">Reference proteome</keyword>
<protein>
    <recommendedName>
        <fullName>Probable aldo-keto reductase 3</fullName>
        <ecNumber>1.1.1.-</ecNumber>
    </recommendedName>
</protein>
<reference key="1">
    <citation type="journal article" date="2002" name="Nature">
        <title>Sequence and analysis of rice chromosome 4.</title>
        <authorList>
            <person name="Feng Q."/>
            <person name="Zhang Y."/>
            <person name="Hao P."/>
            <person name="Wang S."/>
            <person name="Fu G."/>
            <person name="Huang Y."/>
            <person name="Li Y."/>
            <person name="Zhu J."/>
            <person name="Liu Y."/>
            <person name="Hu X."/>
            <person name="Jia P."/>
            <person name="Zhang Y."/>
            <person name="Zhao Q."/>
            <person name="Ying K."/>
            <person name="Yu S."/>
            <person name="Tang Y."/>
            <person name="Weng Q."/>
            <person name="Zhang L."/>
            <person name="Lu Y."/>
            <person name="Mu J."/>
            <person name="Lu Y."/>
            <person name="Zhang L.S."/>
            <person name="Yu Z."/>
            <person name="Fan D."/>
            <person name="Liu X."/>
            <person name="Lu T."/>
            <person name="Li C."/>
            <person name="Wu Y."/>
            <person name="Sun T."/>
            <person name="Lei H."/>
            <person name="Li T."/>
            <person name="Hu H."/>
            <person name="Guan J."/>
            <person name="Wu M."/>
            <person name="Zhang R."/>
            <person name="Zhou B."/>
            <person name="Chen Z."/>
            <person name="Chen L."/>
            <person name="Jin Z."/>
            <person name="Wang R."/>
            <person name="Yin H."/>
            <person name="Cai Z."/>
            <person name="Ren S."/>
            <person name="Lv G."/>
            <person name="Gu W."/>
            <person name="Zhu G."/>
            <person name="Tu Y."/>
            <person name="Jia J."/>
            <person name="Zhang Y."/>
            <person name="Chen J."/>
            <person name="Kang H."/>
            <person name="Chen X."/>
            <person name="Shao C."/>
            <person name="Sun Y."/>
            <person name="Hu Q."/>
            <person name="Zhang X."/>
            <person name="Zhang W."/>
            <person name="Wang L."/>
            <person name="Ding C."/>
            <person name="Sheng H."/>
            <person name="Gu J."/>
            <person name="Chen S."/>
            <person name="Ni L."/>
            <person name="Zhu F."/>
            <person name="Chen W."/>
            <person name="Lan L."/>
            <person name="Lai Y."/>
            <person name="Cheng Z."/>
            <person name="Gu M."/>
            <person name="Jiang J."/>
            <person name="Li J."/>
            <person name="Hong G."/>
            <person name="Xue Y."/>
            <person name="Han B."/>
        </authorList>
    </citation>
    <scope>NUCLEOTIDE SEQUENCE [LARGE SCALE GENOMIC DNA]</scope>
    <source>
        <strain>cv. Nipponbare</strain>
    </source>
</reference>
<reference key="2">
    <citation type="journal article" date="2005" name="Nature">
        <title>The map-based sequence of the rice genome.</title>
        <authorList>
            <consortium name="International rice genome sequencing project (IRGSP)"/>
        </authorList>
    </citation>
    <scope>NUCLEOTIDE SEQUENCE [LARGE SCALE GENOMIC DNA]</scope>
    <source>
        <strain>cv. Nipponbare</strain>
    </source>
</reference>
<reference key="3">
    <citation type="journal article" date="2008" name="Nucleic Acids Res.">
        <title>The rice annotation project database (RAP-DB): 2008 update.</title>
        <authorList>
            <consortium name="The rice annotation project (RAP)"/>
        </authorList>
    </citation>
    <scope>GENOME REANNOTATION</scope>
    <source>
        <strain>cv. Nipponbare</strain>
    </source>
</reference>
<reference key="4">
    <citation type="journal article" date="2013" name="Rice">
        <title>Improvement of the Oryza sativa Nipponbare reference genome using next generation sequence and optical map data.</title>
        <authorList>
            <person name="Kawahara Y."/>
            <person name="de la Bastide M."/>
            <person name="Hamilton J.P."/>
            <person name="Kanamori H."/>
            <person name="McCombie W.R."/>
            <person name="Ouyang S."/>
            <person name="Schwartz D.C."/>
            <person name="Tanaka T."/>
            <person name="Wu J."/>
            <person name="Zhou S."/>
            <person name="Childs K.L."/>
            <person name="Davidson R.M."/>
            <person name="Lin H."/>
            <person name="Quesada-Ocampo L."/>
            <person name="Vaillancourt B."/>
            <person name="Sakai H."/>
            <person name="Lee S.S."/>
            <person name="Kim J."/>
            <person name="Numa H."/>
            <person name="Itoh T."/>
            <person name="Buell C.R."/>
            <person name="Matsumoto T."/>
        </authorList>
    </citation>
    <scope>GENOME REANNOTATION</scope>
    <source>
        <strain>cv. Nipponbare</strain>
    </source>
</reference>
<reference key="5">
    <citation type="journal article" date="2005" name="PLoS Biol.">
        <title>The genomes of Oryza sativa: a history of duplications.</title>
        <authorList>
            <person name="Yu J."/>
            <person name="Wang J."/>
            <person name="Lin W."/>
            <person name="Li S."/>
            <person name="Li H."/>
            <person name="Zhou J."/>
            <person name="Ni P."/>
            <person name="Dong W."/>
            <person name="Hu S."/>
            <person name="Zeng C."/>
            <person name="Zhang J."/>
            <person name="Zhang Y."/>
            <person name="Li R."/>
            <person name="Xu Z."/>
            <person name="Li S."/>
            <person name="Li X."/>
            <person name="Zheng H."/>
            <person name="Cong L."/>
            <person name="Lin L."/>
            <person name="Yin J."/>
            <person name="Geng J."/>
            <person name="Li G."/>
            <person name="Shi J."/>
            <person name="Liu J."/>
            <person name="Lv H."/>
            <person name="Li J."/>
            <person name="Wang J."/>
            <person name="Deng Y."/>
            <person name="Ran L."/>
            <person name="Shi X."/>
            <person name="Wang X."/>
            <person name="Wu Q."/>
            <person name="Li C."/>
            <person name="Ren X."/>
            <person name="Wang J."/>
            <person name="Wang X."/>
            <person name="Li D."/>
            <person name="Liu D."/>
            <person name="Zhang X."/>
            <person name="Ji Z."/>
            <person name="Zhao W."/>
            <person name="Sun Y."/>
            <person name="Zhang Z."/>
            <person name="Bao J."/>
            <person name="Han Y."/>
            <person name="Dong L."/>
            <person name="Ji J."/>
            <person name="Chen P."/>
            <person name="Wu S."/>
            <person name="Liu J."/>
            <person name="Xiao Y."/>
            <person name="Bu D."/>
            <person name="Tan J."/>
            <person name="Yang L."/>
            <person name="Ye C."/>
            <person name="Zhang J."/>
            <person name="Xu J."/>
            <person name="Zhou Y."/>
            <person name="Yu Y."/>
            <person name="Zhang B."/>
            <person name="Zhuang S."/>
            <person name="Wei H."/>
            <person name="Liu B."/>
            <person name="Lei M."/>
            <person name="Yu H."/>
            <person name="Li Y."/>
            <person name="Xu H."/>
            <person name="Wei S."/>
            <person name="He X."/>
            <person name="Fang L."/>
            <person name="Zhang Z."/>
            <person name="Zhang Y."/>
            <person name="Huang X."/>
            <person name="Su Z."/>
            <person name="Tong W."/>
            <person name="Li J."/>
            <person name="Tong Z."/>
            <person name="Li S."/>
            <person name="Ye J."/>
            <person name="Wang L."/>
            <person name="Fang L."/>
            <person name="Lei T."/>
            <person name="Chen C.-S."/>
            <person name="Chen H.-C."/>
            <person name="Xu Z."/>
            <person name="Li H."/>
            <person name="Huang H."/>
            <person name="Zhang F."/>
            <person name="Xu H."/>
            <person name="Li N."/>
            <person name="Zhao C."/>
            <person name="Li S."/>
            <person name="Dong L."/>
            <person name="Huang Y."/>
            <person name="Li L."/>
            <person name="Xi Y."/>
            <person name="Qi Q."/>
            <person name="Li W."/>
            <person name="Zhang B."/>
            <person name="Hu W."/>
            <person name="Zhang Y."/>
            <person name="Tian X."/>
            <person name="Jiao Y."/>
            <person name="Liang X."/>
            <person name="Jin J."/>
            <person name="Gao L."/>
            <person name="Zheng W."/>
            <person name="Hao B."/>
            <person name="Liu S.-M."/>
            <person name="Wang W."/>
            <person name="Yuan L."/>
            <person name="Cao M."/>
            <person name="McDermott J."/>
            <person name="Samudrala R."/>
            <person name="Wang J."/>
            <person name="Wong G.K.-S."/>
            <person name="Yang H."/>
        </authorList>
    </citation>
    <scope>NUCLEOTIDE SEQUENCE [LARGE SCALE GENOMIC DNA]</scope>
    <source>
        <strain>cv. Nipponbare</strain>
    </source>
</reference>
<reference key="6">
    <citation type="journal article" date="2003" name="Science">
        <title>Collection, mapping, and annotation of over 28,000 cDNA clones from japonica rice.</title>
        <authorList>
            <consortium name="The rice full-length cDNA consortium"/>
        </authorList>
    </citation>
    <scope>NUCLEOTIDE SEQUENCE [LARGE SCALE MRNA]</scope>
    <source>
        <strain>cv. Nipponbare</strain>
    </source>
</reference>
<feature type="chain" id="PRO_0000415750" description="Probable aldo-keto reductase 3">
    <location>
        <begin position="1"/>
        <end position="355"/>
    </location>
</feature>
<feature type="active site" description="Proton donor" evidence="1">
    <location>
        <position position="70"/>
    </location>
</feature>
<feature type="binding site" evidence="1">
    <location>
        <position position="138"/>
    </location>
    <ligand>
        <name>substrate</name>
    </ligand>
</feature>
<feature type="binding site" evidence="1">
    <location>
        <begin position="217"/>
        <end position="227"/>
    </location>
    <ligand>
        <name>NADP(+)</name>
        <dbReference type="ChEBI" id="CHEBI:58349"/>
    </ligand>
</feature>
<name>AKR3_ORYSJ</name>
<dbReference type="EC" id="1.1.1.-"/>
<dbReference type="EMBL" id="AL606625">
    <property type="protein sequence ID" value="CAE03315.2"/>
    <property type="molecule type" value="Genomic_DNA"/>
</dbReference>
<dbReference type="EMBL" id="AP008210">
    <property type="protein sequence ID" value="BAF14411.1"/>
    <property type="molecule type" value="Genomic_DNA"/>
</dbReference>
<dbReference type="EMBL" id="AP014960">
    <property type="protein sequence ID" value="BAS88655.1"/>
    <property type="molecule type" value="Genomic_DNA"/>
</dbReference>
<dbReference type="EMBL" id="CM000141">
    <property type="protein sequence ID" value="EAZ30275.1"/>
    <property type="molecule type" value="Genomic_DNA"/>
</dbReference>
<dbReference type="EMBL" id="AK103553">
    <property type="protein sequence ID" value="BAG96139.1"/>
    <property type="molecule type" value="mRNA"/>
</dbReference>
<dbReference type="RefSeq" id="XP_015634128.1">
    <property type="nucleotide sequence ID" value="XM_015778642.1"/>
</dbReference>
<dbReference type="SMR" id="Q7XQ45"/>
<dbReference type="FunCoup" id="Q7XQ45">
    <property type="interactions" value="46"/>
</dbReference>
<dbReference type="STRING" id="39947.Q7XQ45"/>
<dbReference type="PaxDb" id="39947-Q7XQ45"/>
<dbReference type="EnsemblPlants" id="Os04t0339400-01">
    <property type="protein sequence ID" value="Os04t0339400-01"/>
    <property type="gene ID" value="Os04g0339400"/>
</dbReference>
<dbReference type="Gramene" id="Os04t0339400-01">
    <property type="protein sequence ID" value="Os04t0339400-01"/>
    <property type="gene ID" value="Os04g0339400"/>
</dbReference>
<dbReference type="KEGG" id="dosa:Os04g0339400"/>
<dbReference type="eggNOG" id="KOG1575">
    <property type="taxonomic scope" value="Eukaryota"/>
</dbReference>
<dbReference type="HOGENOM" id="CLU_023205_2_1_1"/>
<dbReference type="InParanoid" id="Q7XQ45"/>
<dbReference type="OMA" id="YPVEETI"/>
<dbReference type="OrthoDB" id="37537at2759"/>
<dbReference type="Proteomes" id="UP000000763">
    <property type="component" value="Chromosome 4"/>
</dbReference>
<dbReference type="Proteomes" id="UP000007752">
    <property type="component" value="Chromosome 4"/>
</dbReference>
<dbReference type="Proteomes" id="UP000059680">
    <property type="component" value="Chromosome 4"/>
</dbReference>
<dbReference type="GO" id="GO:0005737">
    <property type="term" value="C:cytoplasm"/>
    <property type="evidence" value="ECO:0000318"/>
    <property type="project" value="GO_Central"/>
</dbReference>
<dbReference type="GO" id="GO:0004033">
    <property type="term" value="F:aldo-keto reductase (NADPH) activity"/>
    <property type="evidence" value="ECO:0000318"/>
    <property type="project" value="GO_Central"/>
</dbReference>
<dbReference type="CDD" id="cd19145">
    <property type="entry name" value="AKR_AKR13D1"/>
    <property type="match status" value="1"/>
</dbReference>
<dbReference type="FunFam" id="3.20.20.100:FF:000048">
    <property type="entry name" value="Probable aldo-keto reductase 4"/>
    <property type="match status" value="1"/>
</dbReference>
<dbReference type="Gene3D" id="3.20.20.100">
    <property type="entry name" value="NADP-dependent oxidoreductase domain"/>
    <property type="match status" value="1"/>
</dbReference>
<dbReference type="InterPro" id="IPR050791">
    <property type="entry name" value="Aldo-Keto_reductase"/>
</dbReference>
<dbReference type="InterPro" id="IPR023210">
    <property type="entry name" value="NADP_OxRdtase_dom"/>
</dbReference>
<dbReference type="InterPro" id="IPR036812">
    <property type="entry name" value="NADP_OxRdtase_dom_sf"/>
</dbReference>
<dbReference type="PANTHER" id="PTHR43625">
    <property type="entry name" value="AFLATOXIN B1 ALDEHYDE REDUCTASE"/>
    <property type="match status" value="1"/>
</dbReference>
<dbReference type="PANTHER" id="PTHR43625:SF37">
    <property type="entry name" value="ALDO-KETO REDUCTASE 3-RELATED"/>
    <property type="match status" value="1"/>
</dbReference>
<dbReference type="Pfam" id="PF00248">
    <property type="entry name" value="Aldo_ket_red"/>
    <property type="match status" value="1"/>
</dbReference>
<dbReference type="SUPFAM" id="SSF51430">
    <property type="entry name" value="NAD(P)-linked oxidoreductase"/>
    <property type="match status" value="1"/>
</dbReference>
<evidence type="ECO:0000250" key="1"/>
<evidence type="ECO:0000305" key="2"/>
<organism>
    <name type="scientific">Oryza sativa subsp. japonica</name>
    <name type="common">Rice</name>
    <dbReference type="NCBI Taxonomy" id="39947"/>
    <lineage>
        <taxon>Eukaryota</taxon>
        <taxon>Viridiplantae</taxon>
        <taxon>Streptophyta</taxon>
        <taxon>Embryophyta</taxon>
        <taxon>Tracheophyta</taxon>
        <taxon>Spermatophyta</taxon>
        <taxon>Magnoliopsida</taxon>
        <taxon>Liliopsida</taxon>
        <taxon>Poales</taxon>
        <taxon>Poaceae</taxon>
        <taxon>BOP clade</taxon>
        <taxon>Oryzoideae</taxon>
        <taxon>Oryzeae</taxon>
        <taxon>Oryzinae</taxon>
        <taxon>Oryza</taxon>
        <taxon>Oryza sativa</taxon>
    </lineage>
</organism>